<proteinExistence type="evidence at protein level"/>
<name>LCK_SAISC</name>
<comment type="function">
    <text evidence="1">Non-receptor tyrosine-protein kinase that plays an essential role in the selection and maturation of developing T-cells in the thymus and in the function of mature T-cells. Plays a key role in T-cell antigen receptor (TCR)-linked signal transduction pathways. Constitutively associated with the cytoplasmic portions of the CD4 and CD8 surface receptors. Association of the TCR with a peptide antigen-bound MHC complex facilitates the interaction of CD4 and CD8 with MHC class II and class I molecules, respectively, thereby recruiting the associated LCK protein to the vicinity of the TCR/CD3 complex. LCK then phosphorylates tyrosine residues within the immunoreceptor tyrosine-based activation motifs (ITAM) of the cytoplasmic tails of the TCR-gamma chains and CD3 subunits, initiating the TCR/CD3 signaling pathway. Once stimulated, the TCR recruits the tyrosine kinase ZAP70, that becomes phosphorylated and activated by LCK. Following this, a large number of signaling molecules are recruited, ultimately leading to lymphokine production. LCK also contributes to signaling by other receptor molecules. Associates directly with the cytoplasmic tail of CD2, which leads to hyperphosphorylation and activation of LCK. Also plays a role in the IL2 receptor-linked signaling pathway that controls the T-cell proliferative response. Binding of IL2 to its receptor results in increased activity of LCK. Is expressed at all stages of thymocyte development and is required for the regulation of maturation events that are governed by both pre-TCR and mature alpha beta TCR. Phosphorylates other substrates including RUNX3, PTK2B/PYK2, the microtubule-associated protein MAPT, RHOH or TYROBP (By similarity).</text>
</comment>
<comment type="catalytic activity">
    <reaction evidence="7">
        <text>L-tyrosyl-[protein] + ATP = O-phospho-L-tyrosyl-[protein] + ADP + H(+)</text>
        <dbReference type="Rhea" id="RHEA:10596"/>
        <dbReference type="Rhea" id="RHEA-COMP:10136"/>
        <dbReference type="Rhea" id="RHEA-COMP:20101"/>
        <dbReference type="ChEBI" id="CHEBI:15378"/>
        <dbReference type="ChEBI" id="CHEBI:30616"/>
        <dbReference type="ChEBI" id="CHEBI:46858"/>
        <dbReference type="ChEBI" id="CHEBI:61978"/>
        <dbReference type="ChEBI" id="CHEBI:456216"/>
        <dbReference type="EC" id="2.7.10.2"/>
    </reaction>
</comment>
<comment type="activity regulation">
    <text evidence="1">The relative activities of the inhibitory tyrosine-protein kinase CSK and the activating tyrosine-protein phosphatase PTPRC/CD45 determine the level of LCK activity. These interactions allow rapid and efficient activation of LCK in response to TCR stimulation (By similarity).</text>
</comment>
<comment type="subunit">
    <text evidence="2">Binds to the cytoplasmic domain of cell surface receptors, such as AXL, CD2, CD4, CD5, CD8, CD44, CD45 and CD122. Also binds to effector molecules, such as PI4K, VAV1, RASA1, FYB1 and to other protein kinases including CDK1, RAF1, ZAP70 and SYK. Binds to phosphatidylinositol 3'-kinase (PI3K) from T-lymphocytes through its SH3 domain and to the tyrosine phosphorylated form of KHDRBS1/p70 through its SH2 domain. Interacts with SQSTM1. Interacts with phosphorylated LIME1. Interacts with CBLB and PTPRH. Interacts with RUNX3. Forms a signaling complex with EPHA1, PTK2B and PI3-KINASE; upon activation by EFNA1 which may regulate T-lymphocytes migration. Associates with ZAP70 and RHOH; these interactions allow LCK-mediated RHOH and CD3 subunit phosphorylations in the presence of functional ZAP70 (By similarity). Interacts with Saimiriine herpesvirus 2 TIP. Interacts with UNC119; this interaction plays a crucial role in activation of LCK. Interacts with CEACAM1 (via cytoplasmic domain); mediates CEACAM1 phosphorylation resulting in PTPN6 recruitment that dephosphorylates TCR stimulation-induced CD247 and ZAP70. Interacts with CD160. Interacts with CD48.</text>
</comment>
<comment type="subcellular location">
    <subcellularLocation>
        <location evidence="2">Cell membrane</location>
        <topology evidence="2">Lipid-anchor</topology>
        <orientation evidence="2">Cytoplasmic side</orientation>
    </subcellularLocation>
    <subcellularLocation>
        <location evidence="2">Cytoplasm</location>
        <location evidence="2">Cytosol</location>
    </subcellularLocation>
    <text evidence="2">Present in lipid rafts in an inactive form.</text>
</comment>
<comment type="tissue specificity">
    <text>Expressed specifically in lymphoid cells.</text>
</comment>
<comment type="developmental stage">
    <text>Levels remain relatively constant throughout T-cell ontogeny.</text>
</comment>
<comment type="domain">
    <text evidence="1">The SH2 domain mediates interaction with SQSTM1. Interaction is regulated by Ser-59 phosphorylation (By similarity).</text>
</comment>
<comment type="PTM">
    <text evidence="1 2">Autophosphorylated on Tyr-394, increasing enzymatic activity, this site is dephosphorylated by PTN22. Phosphorylated on Tyr-505 by CSK, decreasing activity. Dephosphorylated by PTPRC/CD45. Dephosphorylation at Tyr-394 by PTPN2 negatively regulates T-cells differentiation (By similarity). Dephosphorylation at Tyr-394 by DUSP22 negatively regulates T-cell receptor signaling (By similarity).</text>
</comment>
<comment type="PTM">
    <text evidence="1">Myristoylation is required prior to palmitoylation.</text>
</comment>
<comment type="PTM">
    <text evidence="2">Palmitoylation regulates association with the plasma membrane and could be mediated by ZDHHC2.</text>
</comment>
<comment type="PTM">
    <text evidence="2">'Lys-63'-linked ubiquitinated at Lys-99 and Lys-276 by UBR2; this modification is required for autophosphorylation at Tyr-394.</text>
</comment>
<comment type="similarity">
    <text evidence="4">Belongs to the protein kinase superfamily. Tyr protein kinase family.</text>
</comment>
<comment type="caution">
    <text evidence="8">LCK seems to be active in all vertebrates, except in squirrel monkey T-cells, in which it is inactivated. The reason seems to be that squirrel monkeys are the natural host for Saimiriine herpesvirus 2, which is able to efficiently transform T-cells through a mechanism involving viral Tip/ host LCK interaction. Its inactivation may a mechanism that specifically counteracts the transformation effects of viral Tip.</text>
</comment>
<gene>
    <name type="primary">LCK</name>
</gene>
<dbReference type="EC" id="2.7.10.2"/>
<dbReference type="EMBL" id="AJ277921">
    <property type="protein sequence ID" value="CAC38871.1"/>
    <property type="molecule type" value="mRNA"/>
</dbReference>
<dbReference type="BMRB" id="Q95KR7"/>
<dbReference type="SMR" id="Q95KR7"/>
<dbReference type="GO" id="GO:0005829">
    <property type="term" value="C:cytosol"/>
    <property type="evidence" value="ECO:0007669"/>
    <property type="project" value="UniProtKB-SubCell"/>
</dbReference>
<dbReference type="GO" id="GO:0045121">
    <property type="term" value="C:membrane raft"/>
    <property type="evidence" value="ECO:0000250"/>
    <property type="project" value="UniProtKB"/>
</dbReference>
<dbReference type="GO" id="GO:0000242">
    <property type="term" value="C:pericentriolar material"/>
    <property type="evidence" value="ECO:0000250"/>
    <property type="project" value="UniProtKB"/>
</dbReference>
<dbReference type="GO" id="GO:0005886">
    <property type="term" value="C:plasma membrane"/>
    <property type="evidence" value="ECO:0007669"/>
    <property type="project" value="UniProtKB-SubCell"/>
</dbReference>
<dbReference type="GO" id="GO:0005524">
    <property type="term" value="F:ATP binding"/>
    <property type="evidence" value="ECO:0007669"/>
    <property type="project" value="UniProtKB-KW"/>
</dbReference>
<dbReference type="GO" id="GO:0004715">
    <property type="term" value="F:non-membrane spanning protein tyrosine kinase activity"/>
    <property type="evidence" value="ECO:0007669"/>
    <property type="project" value="UniProtKB-EC"/>
</dbReference>
<dbReference type="GO" id="GO:0004722">
    <property type="term" value="F:protein serine/threonine phosphatase activity"/>
    <property type="evidence" value="ECO:0000250"/>
    <property type="project" value="UniProtKB"/>
</dbReference>
<dbReference type="GO" id="GO:0004713">
    <property type="term" value="F:protein tyrosine kinase activity"/>
    <property type="evidence" value="ECO:0000250"/>
    <property type="project" value="UniProtKB"/>
</dbReference>
<dbReference type="GO" id="GO:0042169">
    <property type="term" value="F:SH2 domain binding"/>
    <property type="evidence" value="ECO:0000250"/>
    <property type="project" value="UniProtKB"/>
</dbReference>
<dbReference type="GO" id="GO:0006882">
    <property type="term" value="P:intracellular zinc ion homeostasis"/>
    <property type="evidence" value="ECO:0000250"/>
    <property type="project" value="UniProtKB"/>
</dbReference>
<dbReference type="GO" id="GO:2001244">
    <property type="term" value="P:positive regulation of intrinsic apoptotic signaling pathway"/>
    <property type="evidence" value="ECO:0000250"/>
    <property type="project" value="UniProtKB"/>
</dbReference>
<dbReference type="GO" id="GO:0050870">
    <property type="term" value="P:positive regulation of T cell activation"/>
    <property type="evidence" value="ECO:0000250"/>
    <property type="project" value="UniProtKB"/>
</dbReference>
<dbReference type="GO" id="GO:0009410">
    <property type="term" value="P:response to xenobiotic stimulus"/>
    <property type="evidence" value="ECO:0000250"/>
    <property type="project" value="UniProtKB"/>
</dbReference>
<dbReference type="GO" id="GO:0030217">
    <property type="term" value="P:T cell differentiation"/>
    <property type="evidence" value="ECO:0000250"/>
    <property type="project" value="UniProtKB"/>
</dbReference>
<dbReference type="CDD" id="cd05067">
    <property type="entry name" value="PTKc_Lck_Blk"/>
    <property type="match status" value="1"/>
</dbReference>
<dbReference type="CDD" id="cd10362">
    <property type="entry name" value="SH2_Src_Lck"/>
    <property type="match status" value="1"/>
</dbReference>
<dbReference type="CDD" id="cd12005">
    <property type="entry name" value="SH3_Lck"/>
    <property type="match status" value="1"/>
</dbReference>
<dbReference type="FunFam" id="1.10.510.10:FF:000553">
    <property type="entry name" value="Tyrosine-protein kinase"/>
    <property type="match status" value="1"/>
</dbReference>
<dbReference type="FunFam" id="2.30.30.40:FF:000152">
    <property type="entry name" value="Tyrosine-protein kinase"/>
    <property type="match status" value="1"/>
</dbReference>
<dbReference type="FunFam" id="3.30.200.20:FF:000036">
    <property type="entry name" value="Tyrosine-protein kinase"/>
    <property type="match status" value="1"/>
</dbReference>
<dbReference type="FunFam" id="3.30.505.10:FF:000077">
    <property type="entry name" value="Tyrosine-protein kinase Lck"/>
    <property type="match status" value="1"/>
</dbReference>
<dbReference type="Gene3D" id="3.30.200.20">
    <property type="entry name" value="Phosphorylase Kinase, domain 1"/>
    <property type="match status" value="1"/>
</dbReference>
<dbReference type="Gene3D" id="3.30.505.10">
    <property type="entry name" value="SH2 domain"/>
    <property type="match status" value="1"/>
</dbReference>
<dbReference type="Gene3D" id="2.30.30.40">
    <property type="entry name" value="SH3 Domains"/>
    <property type="match status" value="1"/>
</dbReference>
<dbReference type="Gene3D" id="1.10.510.10">
    <property type="entry name" value="Transferase(Phosphotransferase) domain 1"/>
    <property type="match status" value="1"/>
</dbReference>
<dbReference type="InterPro" id="IPR011009">
    <property type="entry name" value="Kinase-like_dom_sf"/>
</dbReference>
<dbReference type="InterPro" id="IPR035850">
    <property type="entry name" value="Lck_SH2"/>
</dbReference>
<dbReference type="InterPro" id="IPR035749">
    <property type="entry name" value="Lck_SH3"/>
</dbReference>
<dbReference type="InterPro" id="IPR050198">
    <property type="entry name" value="Non-receptor_tyrosine_kinases"/>
</dbReference>
<dbReference type="InterPro" id="IPR000719">
    <property type="entry name" value="Prot_kinase_dom"/>
</dbReference>
<dbReference type="InterPro" id="IPR017441">
    <property type="entry name" value="Protein_kinase_ATP_BS"/>
</dbReference>
<dbReference type="InterPro" id="IPR001245">
    <property type="entry name" value="Ser-Thr/Tyr_kinase_cat_dom"/>
</dbReference>
<dbReference type="InterPro" id="IPR000980">
    <property type="entry name" value="SH2"/>
</dbReference>
<dbReference type="InterPro" id="IPR036860">
    <property type="entry name" value="SH2_dom_sf"/>
</dbReference>
<dbReference type="InterPro" id="IPR036028">
    <property type="entry name" value="SH3-like_dom_sf"/>
</dbReference>
<dbReference type="InterPro" id="IPR001452">
    <property type="entry name" value="SH3_domain"/>
</dbReference>
<dbReference type="InterPro" id="IPR008266">
    <property type="entry name" value="Tyr_kinase_AS"/>
</dbReference>
<dbReference type="InterPro" id="IPR020635">
    <property type="entry name" value="Tyr_kinase_cat_dom"/>
</dbReference>
<dbReference type="PANTHER" id="PTHR24418">
    <property type="entry name" value="TYROSINE-PROTEIN KINASE"/>
    <property type="match status" value="1"/>
</dbReference>
<dbReference type="Pfam" id="PF07714">
    <property type="entry name" value="PK_Tyr_Ser-Thr"/>
    <property type="match status" value="1"/>
</dbReference>
<dbReference type="Pfam" id="PF00017">
    <property type="entry name" value="SH2"/>
    <property type="match status" value="1"/>
</dbReference>
<dbReference type="Pfam" id="PF00018">
    <property type="entry name" value="SH3_1"/>
    <property type="match status" value="1"/>
</dbReference>
<dbReference type="PRINTS" id="PR00401">
    <property type="entry name" value="SH2DOMAIN"/>
</dbReference>
<dbReference type="PRINTS" id="PR00452">
    <property type="entry name" value="SH3DOMAIN"/>
</dbReference>
<dbReference type="PRINTS" id="PR00109">
    <property type="entry name" value="TYRKINASE"/>
</dbReference>
<dbReference type="SMART" id="SM00252">
    <property type="entry name" value="SH2"/>
    <property type="match status" value="1"/>
</dbReference>
<dbReference type="SMART" id="SM00326">
    <property type="entry name" value="SH3"/>
    <property type="match status" value="1"/>
</dbReference>
<dbReference type="SMART" id="SM00219">
    <property type="entry name" value="TyrKc"/>
    <property type="match status" value="1"/>
</dbReference>
<dbReference type="SUPFAM" id="SSF56112">
    <property type="entry name" value="Protein kinase-like (PK-like)"/>
    <property type="match status" value="1"/>
</dbReference>
<dbReference type="SUPFAM" id="SSF55550">
    <property type="entry name" value="SH2 domain"/>
    <property type="match status" value="1"/>
</dbReference>
<dbReference type="SUPFAM" id="SSF50044">
    <property type="entry name" value="SH3-domain"/>
    <property type="match status" value="1"/>
</dbReference>
<dbReference type="PROSITE" id="PS00107">
    <property type="entry name" value="PROTEIN_KINASE_ATP"/>
    <property type="match status" value="1"/>
</dbReference>
<dbReference type="PROSITE" id="PS50011">
    <property type="entry name" value="PROTEIN_KINASE_DOM"/>
    <property type="match status" value="1"/>
</dbReference>
<dbReference type="PROSITE" id="PS00109">
    <property type="entry name" value="PROTEIN_KINASE_TYR"/>
    <property type="match status" value="1"/>
</dbReference>
<dbReference type="PROSITE" id="PS50001">
    <property type="entry name" value="SH2"/>
    <property type="match status" value="1"/>
</dbReference>
<dbReference type="PROSITE" id="PS50002">
    <property type="entry name" value="SH3"/>
    <property type="match status" value="1"/>
</dbReference>
<keyword id="KW-0067">ATP-binding</keyword>
<keyword id="KW-1003">Cell membrane</keyword>
<keyword id="KW-0963">Cytoplasm</keyword>
<keyword id="KW-1017">Isopeptide bond</keyword>
<keyword id="KW-0418">Kinase</keyword>
<keyword id="KW-0449">Lipoprotein</keyword>
<keyword id="KW-0472">Membrane</keyword>
<keyword id="KW-0519">Myristate</keyword>
<keyword id="KW-0547">Nucleotide-binding</keyword>
<keyword id="KW-0564">Palmitate</keyword>
<keyword id="KW-0597">Phosphoprotein</keyword>
<keyword id="KW-0656">Proto-oncogene</keyword>
<keyword id="KW-0727">SH2 domain</keyword>
<keyword id="KW-0728">SH3 domain</keyword>
<keyword id="KW-0808">Transferase</keyword>
<keyword id="KW-0829">Tyrosine-protein kinase</keyword>
<keyword id="KW-0832">Ubl conjugation</keyword>
<feature type="initiator methionine" description="Removed">
    <location>
        <position position="1"/>
    </location>
</feature>
<feature type="chain" id="PRO_0000088127" description="Proto-oncogene tyrosine-protein kinase LCK">
    <location>
        <begin position="2"/>
        <end position="509"/>
    </location>
</feature>
<feature type="domain" description="SH3" evidence="6">
    <location>
        <begin position="61"/>
        <end position="121"/>
    </location>
</feature>
<feature type="domain" description="SH2" evidence="5">
    <location>
        <begin position="127"/>
        <end position="224"/>
    </location>
</feature>
<feature type="domain" description="Protein kinase" evidence="4">
    <location>
        <begin position="245"/>
        <end position="498"/>
    </location>
</feature>
<feature type="region of interest" description="Interactions with CD4 and CD8" evidence="1">
    <location>
        <begin position="2"/>
        <end position="72"/>
    </location>
</feature>
<feature type="region of interest" description="Interaction with PTPRH" evidence="1">
    <location>
        <begin position="154"/>
        <end position="242"/>
    </location>
</feature>
<feature type="active site" description="Proton acceptor" evidence="4 7">
    <location>
        <position position="364"/>
    </location>
</feature>
<feature type="binding site" evidence="4">
    <location>
        <begin position="251"/>
        <end position="259"/>
    </location>
    <ligand>
        <name>ATP</name>
        <dbReference type="ChEBI" id="CHEBI:30616"/>
    </ligand>
</feature>
<feature type="binding site" evidence="4">
    <location>
        <position position="273"/>
    </location>
    <ligand>
        <name>ATP</name>
        <dbReference type="ChEBI" id="CHEBI:30616"/>
    </ligand>
</feature>
<feature type="modified residue" description="Phosphoserine" evidence="2">
    <location>
        <position position="102"/>
    </location>
</feature>
<feature type="modified residue" description="Phosphothreonine" evidence="2">
    <location>
        <position position="159"/>
    </location>
</feature>
<feature type="modified residue" description="Phosphoserine" evidence="2">
    <location>
        <position position="162"/>
    </location>
</feature>
<feature type="modified residue" description="Phosphotyrosine" evidence="3">
    <location>
        <position position="192"/>
    </location>
</feature>
<feature type="modified residue" description="Phosphoserine" evidence="2">
    <location>
        <position position="194"/>
    </location>
</feature>
<feature type="modified residue" description="Phosphotyrosine; by autocatalysis" evidence="2">
    <location>
        <position position="394"/>
    </location>
</feature>
<feature type="modified residue" description="Phosphotyrosine; by CSK" evidence="2">
    <location>
        <position position="505"/>
    </location>
</feature>
<feature type="lipid moiety-binding region" description="N-myristoyl glycine" evidence="1">
    <location>
        <position position="2"/>
    </location>
</feature>
<feature type="lipid moiety-binding region" description="S-palmitoyl cysteine" evidence="1">
    <location>
        <position position="3"/>
    </location>
</feature>
<feature type="lipid moiety-binding region" description="S-palmitoyl cysteine" evidence="1">
    <location>
        <position position="5"/>
    </location>
</feature>
<feature type="cross-link" description="Glycyl lysine isopeptide (Lys-Gly) (interchain with G-Cter in ubiquitin)" evidence="2">
    <location>
        <position position="99"/>
    </location>
</feature>
<feature type="cross-link" description="Glycyl lysine isopeptide (Lys-Gly) (interchain with G-Cter in ubiquitin)" evidence="2">
    <location>
        <position position="276"/>
    </location>
</feature>
<reference key="1">
    <citation type="journal article" date="2001" name="J. Virol.">
        <title>Downregulation of p56Lck tyrosine kinase activity in T cells of squirrel monkeys (Saimiri sciureus) correlates with the non-transforming and apathogenic properties of herpesvirus saimiri in its natural host.</title>
        <authorList>
            <person name="Greve T."/>
            <person name="Tamgueney G."/>
            <person name="Fleischer B."/>
            <person name="Fickenscher H."/>
            <person name="Broeker B.M."/>
        </authorList>
    </citation>
    <scope>NUCLEOTIDE SEQUENCE [MRNA]</scope>
    <scope>ACTIVITY REGULATION</scope>
    <scope>INTERACTION WITH SAIMIRIINE HERPESVIRUS 2 TIP</scope>
    <source>
        <tissue>T-cell</tissue>
    </source>
</reference>
<sequence>MGCGCSSHLEDDWMENIDVCENCHYPIVPLDGKATLLFRNGSEVRDPLVRYEGSNPPASPLQDNLVIALHSYEPSHDGDLGFEKGEHLRILEQNGEWWKAQSLTTGQEGFVPFNFVAKANSLEPEPWFFKNLSRKDAERQLLAPGNTHGSFLIRESESTAGSFSLSVRDFDQNQGEVVKHYKIRNLDNGGFYISPRITFSGLHELVRHYTNASDGLCTRLSRPCQTQKPQKPWWEDEWEVPRETLKLVERLGAGQFGEVWMGYYNEHTKVAVKSLKQGSMSPDAFLAEANLMKQLQHKRLVRLYAVVTEEPIYIITEYMENGSLVDFLKTPSGIKLTINKLLDMAAQIVEGMAFLEERNYIHRDLRAANILVSDTLSCKIADFGLARLIEDNEYTAREGAKFPIKWTAPEAINYGTFTIKSDVWSFGILMTEIVTHGRIPYPGMTNPEVIQNLERGYRMPRPDNCPEELYKLMMQCWRERPDDRPTFDYLRSVLEDFFTATEGQYQPQP</sequence>
<accession>Q95KR7</accession>
<evidence type="ECO:0000250" key="1"/>
<evidence type="ECO:0000250" key="2">
    <source>
        <dbReference type="UniProtKB" id="P06239"/>
    </source>
</evidence>
<evidence type="ECO:0000250" key="3">
    <source>
        <dbReference type="UniProtKB" id="P06240"/>
    </source>
</evidence>
<evidence type="ECO:0000255" key="4">
    <source>
        <dbReference type="PROSITE-ProRule" id="PRU00159"/>
    </source>
</evidence>
<evidence type="ECO:0000255" key="5">
    <source>
        <dbReference type="PROSITE-ProRule" id="PRU00191"/>
    </source>
</evidence>
<evidence type="ECO:0000255" key="6">
    <source>
        <dbReference type="PROSITE-ProRule" id="PRU00192"/>
    </source>
</evidence>
<evidence type="ECO:0000255" key="7">
    <source>
        <dbReference type="PROSITE-ProRule" id="PRU10028"/>
    </source>
</evidence>
<evidence type="ECO:0000305" key="8"/>
<organism>
    <name type="scientific">Saimiri sciureus</name>
    <name type="common">Common squirrel monkey</name>
    <dbReference type="NCBI Taxonomy" id="9521"/>
    <lineage>
        <taxon>Eukaryota</taxon>
        <taxon>Metazoa</taxon>
        <taxon>Chordata</taxon>
        <taxon>Craniata</taxon>
        <taxon>Vertebrata</taxon>
        <taxon>Euteleostomi</taxon>
        <taxon>Mammalia</taxon>
        <taxon>Eutheria</taxon>
        <taxon>Euarchontoglires</taxon>
        <taxon>Primates</taxon>
        <taxon>Haplorrhini</taxon>
        <taxon>Platyrrhini</taxon>
        <taxon>Cebidae</taxon>
        <taxon>Saimiriinae</taxon>
        <taxon>Saimiri</taxon>
    </lineage>
</organism>
<protein>
    <recommendedName>
        <fullName>Proto-oncogene tyrosine-protein kinase LCK</fullName>
        <ecNumber>2.7.10.2</ecNumber>
    </recommendedName>
    <alternativeName>
        <fullName>Lymphocyte cell-specific protein-tyrosine kinase</fullName>
    </alternativeName>
    <alternativeName>
        <fullName>p56-LCK</fullName>
    </alternativeName>
</protein>